<keyword id="KW-0028">Amino-acid biosynthesis</keyword>
<keyword id="KW-0963">Cytoplasm</keyword>
<keyword id="KW-0554">One-carbon metabolism</keyword>
<keyword id="KW-0663">Pyridoxal phosphate</keyword>
<keyword id="KW-1185">Reference proteome</keyword>
<keyword id="KW-0808">Transferase</keyword>
<proteinExistence type="inferred from homology"/>
<sequence length="414" mass="44920">MYHRNILVEQTDPEIFAAIQAENARQEHHIELIASENYASPAVMAAQGSQLTNKYAEGYPGRRYYGGCEYVDVAEQLAIDRIKQIFGADAANVQPHCGASANEAVFLAFLKPGDTIMGMSLAEGGHLTHGMALNMSGKWFNVVSYGLNDKEEIDYDAMERKAHETRPKLIIAGASAYSLRIDFERFAKVAKAVGAIFMVDIAHYAGLVAAGVYPNPVPHADVVTSTTHKSLRGPRGGIILMKAEHEKAINSAIFPGLQGGPLMHVIAAKAVAFKEALSPEFKTYQQQVLTNARIVAETLTQRGLRIVSGRTESHLMLVDLRAKGITGKEAEAVLGSAHMTINKNAIPNDPEKPMVTSGVRIGTPAMTTRGFKDEEARVTANLIADVLDNPRDAANIEAVRAKVNALTSRFPVYR</sequence>
<dbReference type="EC" id="2.1.2.1" evidence="1"/>
<dbReference type="EMBL" id="CP000316">
    <property type="protein sequence ID" value="ABE44789.1"/>
    <property type="molecule type" value="Genomic_DNA"/>
</dbReference>
<dbReference type="RefSeq" id="WP_011483787.1">
    <property type="nucleotide sequence ID" value="NC_007948.1"/>
</dbReference>
<dbReference type="SMR" id="Q129K3"/>
<dbReference type="STRING" id="296591.Bpro_2874"/>
<dbReference type="KEGG" id="pol:Bpro_2874"/>
<dbReference type="eggNOG" id="COG0112">
    <property type="taxonomic scope" value="Bacteria"/>
</dbReference>
<dbReference type="HOGENOM" id="CLU_022477_2_1_4"/>
<dbReference type="OrthoDB" id="9803846at2"/>
<dbReference type="UniPathway" id="UPA00193"/>
<dbReference type="UniPathway" id="UPA00288">
    <property type="reaction ID" value="UER01023"/>
</dbReference>
<dbReference type="Proteomes" id="UP000001983">
    <property type="component" value="Chromosome"/>
</dbReference>
<dbReference type="GO" id="GO:0005829">
    <property type="term" value="C:cytosol"/>
    <property type="evidence" value="ECO:0007669"/>
    <property type="project" value="TreeGrafter"/>
</dbReference>
<dbReference type="GO" id="GO:0004372">
    <property type="term" value="F:glycine hydroxymethyltransferase activity"/>
    <property type="evidence" value="ECO:0007669"/>
    <property type="project" value="UniProtKB-UniRule"/>
</dbReference>
<dbReference type="GO" id="GO:0030170">
    <property type="term" value="F:pyridoxal phosphate binding"/>
    <property type="evidence" value="ECO:0007669"/>
    <property type="project" value="UniProtKB-UniRule"/>
</dbReference>
<dbReference type="GO" id="GO:0019264">
    <property type="term" value="P:glycine biosynthetic process from serine"/>
    <property type="evidence" value="ECO:0007669"/>
    <property type="project" value="UniProtKB-UniRule"/>
</dbReference>
<dbReference type="GO" id="GO:0035999">
    <property type="term" value="P:tetrahydrofolate interconversion"/>
    <property type="evidence" value="ECO:0007669"/>
    <property type="project" value="UniProtKB-UniRule"/>
</dbReference>
<dbReference type="CDD" id="cd00378">
    <property type="entry name" value="SHMT"/>
    <property type="match status" value="1"/>
</dbReference>
<dbReference type="FunFam" id="3.40.640.10:FF:000001">
    <property type="entry name" value="Serine hydroxymethyltransferase"/>
    <property type="match status" value="1"/>
</dbReference>
<dbReference type="FunFam" id="3.90.1150.10:FF:000003">
    <property type="entry name" value="Serine hydroxymethyltransferase"/>
    <property type="match status" value="1"/>
</dbReference>
<dbReference type="Gene3D" id="3.90.1150.10">
    <property type="entry name" value="Aspartate Aminotransferase, domain 1"/>
    <property type="match status" value="1"/>
</dbReference>
<dbReference type="Gene3D" id="3.40.640.10">
    <property type="entry name" value="Type I PLP-dependent aspartate aminotransferase-like (Major domain)"/>
    <property type="match status" value="1"/>
</dbReference>
<dbReference type="HAMAP" id="MF_00051">
    <property type="entry name" value="SHMT"/>
    <property type="match status" value="1"/>
</dbReference>
<dbReference type="InterPro" id="IPR015424">
    <property type="entry name" value="PyrdxlP-dep_Trfase"/>
</dbReference>
<dbReference type="InterPro" id="IPR015421">
    <property type="entry name" value="PyrdxlP-dep_Trfase_major"/>
</dbReference>
<dbReference type="InterPro" id="IPR015422">
    <property type="entry name" value="PyrdxlP-dep_Trfase_small"/>
</dbReference>
<dbReference type="InterPro" id="IPR001085">
    <property type="entry name" value="Ser_HO-MeTrfase"/>
</dbReference>
<dbReference type="InterPro" id="IPR049943">
    <property type="entry name" value="Ser_HO-MeTrfase-like"/>
</dbReference>
<dbReference type="InterPro" id="IPR019798">
    <property type="entry name" value="Ser_HO-MeTrfase_PLP_BS"/>
</dbReference>
<dbReference type="InterPro" id="IPR039429">
    <property type="entry name" value="SHMT-like_dom"/>
</dbReference>
<dbReference type="NCBIfam" id="NF000586">
    <property type="entry name" value="PRK00011.1"/>
    <property type="match status" value="1"/>
</dbReference>
<dbReference type="PANTHER" id="PTHR11680">
    <property type="entry name" value="SERINE HYDROXYMETHYLTRANSFERASE"/>
    <property type="match status" value="1"/>
</dbReference>
<dbReference type="PANTHER" id="PTHR11680:SF50">
    <property type="entry name" value="SERINE HYDROXYMETHYLTRANSFERASE"/>
    <property type="match status" value="1"/>
</dbReference>
<dbReference type="Pfam" id="PF00464">
    <property type="entry name" value="SHMT"/>
    <property type="match status" value="1"/>
</dbReference>
<dbReference type="PIRSF" id="PIRSF000412">
    <property type="entry name" value="SHMT"/>
    <property type="match status" value="1"/>
</dbReference>
<dbReference type="SUPFAM" id="SSF53383">
    <property type="entry name" value="PLP-dependent transferases"/>
    <property type="match status" value="1"/>
</dbReference>
<dbReference type="PROSITE" id="PS00096">
    <property type="entry name" value="SHMT"/>
    <property type="match status" value="1"/>
</dbReference>
<organism>
    <name type="scientific">Polaromonas sp. (strain JS666 / ATCC BAA-500)</name>
    <dbReference type="NCBI Taxonomy" id="296591"/>
    <lineage>
        <taxon>Bacteria</taxon>
        <taxon>Pseudomonadati</taxon>
        <taxon>Pseudomonadota</taxon>
        <taxon>Betaproteobacteria</taxon>
        <taxon>Burkholderiales</taxon>
        <taxon>Comamonadaceae</taxon>
        <taxon>Polaromonas</taxon>
    </lineage>
</organism>
<protein>
    <recommendedName>
        <fullName evidence="1">Serine hydroxymethyltransferase</fullName>
        <shortName evidence="1">SHMT</shortName>
        <shortName evidence="1">Serine methylase</shortName>
        <ecNumber evidence="1">2.1.2.1</ecNumber>
    </recommendedName>
</protein>
<evidence type="ECO:0000255" key="1">
    <source>
        <dbReference type="HAMAP-Rule" id="MF_00051"/>
    </source>
</evidence>
<name>GLYA_POLSJ</name>
<comment type="function">
    <text evidence="1">Catalyzes the reversible interconversion of serine and glycine with tetrahydrofolate (THF) serving as the one-carbon carrier. This reaction serves as the major source of one-carbon groups required for the biosynthesis of purines, thymidylate, methionine, and other important biomolecules. Also exhibits THF-independent aldolase activity toward beta-hydroxyamino acids, producing glycine and aldehydes, via a retro-aldol mechanism.</text>
</comment>
<comment type="catalytic activity">
    <reaction evidence="1">
        <text>(6R)-5,10-methylene-5,6,7,8-tetrahydrofolate + glycine + H2O = (6S)-5,6,7,8-tetrahydrofolate + L-serine</text>
        <dbReference type="Rhea" id="RHEA:15481"/>
        <dbReference type="ChEBI" id="CHEBI:15377"/>
        <dbReference type="ChEBI" id="CHEBI:15636"/>
        <dbReference type="ChEBI" id="CHEBI:33384"/>
        <dbReference type="ChEBI" id="CHEBI:57305"/>
        <dbReference type="ChEBI" id="CHEBI:57453"/>
        <dbReference type="EC" id="2.1.2.1"/>
    </reaction>
</comment>
<comment type="cofactor">
    <cofactor evidence="1">
        <name>pyridoxal 5'-phosphate</name>
        <dbReference type="ChEBI" id="CHEBI:597326"/>
    </cofactor>
</comment>
<comment type="pathway">
    <text evidence="1">One-carbon metabolism; tetrahydrofolate interconversion.</text>
</comment>
<comment type="pathway">
    <text evidence="1">Amino-acid biosynthesis; glycine biosynthesis; glycine from L-serine: step 1/1.</text>
</comment>
<comment type="subunit">
    <text evidence="1">Homodimer.</text>
</comment>
<comment type="subcellular location">
    <subcellularLocation>
        <location evidence="1">Cytoplasm</location>
    </subcellularLocation>
</comment>
<comment type="similarity">
    <text evidence="1">Belongs to the SHMT family.</text>
</comment>
<feature type="chain" id="PRO_1000006292" description="Serine hydroxymethyltransferase">
    <location>
        <begin position="1"/>
        <end position="414"/>
    </location>
</feature>
<feature type="binding site" evidence="1">
    <location>
        <position position="121"/>
    </location>
    <ligand>
        <name>(6S)-5,6,7,8-tetrahydrofolate</name>
        <dbReference type="ChEBI" id="CHEBI:57453"/>
    </ligand>
</feature>
<feature type="binding site" evidence="1">
    <location>
        <begin position="125"/>
        <end position="127"/>
    </location>
    <ligand>
        <name>(6S)-5,6,7,8-tetrahydrofolate</name>
        <dbReference type="ChEBI" id="CHEBI:57453"/>
    </ligand>
</feature>
<feature type="site" description="Plays an important role in substrate specificity" evidence="1">
    <location>
        <position position="228"/>
    </location>
</feature>
<feature type="modified residue" description="N6-(pyridoxal phosphate)lysine" evidence="1">
    <location>
        <position position="229"/>
    </location>
</feature>
<reference key="1">
    <citation type="journal article" date="2008" name="Appl. Environ. Microbiol.">
        <title>The genome of Polaromonas sp. strain JS666: insights into the evolution of a hydrocarbon- and xenobiotic-degrading bacterium, and features of relevance to biotechnology.</title>
        <authorList>
            <person name="Mattes T.E."/>
            <person name="Alexander A.K."/>
            <person name="Richardson P.M."/>
            <person name="Munk A.C."/>
            <person name="Han C.S."/>
            <person name="Stothard P."/>
            <person name="Coleman N.V."/>
        </authorList>
    </citation>
    <scope>NUCLEOTIDE SEQUENCE [LARGE SCALE GENOMIC DNA]</scope>
    <source>
        <strain>JS666 / ATCC BAA-500</strain>
    </source>
</reference>
<accession>Q129K3</accession>
<gene>
    <name evidence="1" type="primary">glyA</name>
    <name type="ordered locus">Bpro_2874</name>
</gene>